<accession>A0KQH8</accession>
<sequence>MTPSQRVSAVFAEQFEQQPDLLVRAPGRVNLIGEHTDYNDGFVLPCAIDYETCVAIGLRDDSLVHVIAADYGNQRDLFDLDQPIGHHADQRWSDYIRGVVKYLQERGYPLRGLNLVVSGNVPQGAGLSSSASLEVAIGQAFKEALGLAITQAEIALNGQQAENQFVGCNCGIMDQMISASGKQDHALLLDCRSLETRLIPMPTDLAVLIVNSNVRRGLVDSEYNTRRQQCEAAARHYGVKALRDLDLAALEAGKAGLDEVCYRRARHVVGDNSRTLAAADALAQGDLVRLGELMADSHAAMRDDFEITVPAIDGLVEIIKARIGTEGGVRMTGGGFGGCVVALLHPDKVAEVIAAVDAEYPARFGLKADSYVCRASAGAGKL</sequence>
<comment type="function">
    <text evidence="1">Catalyzes the transfer of the gamma-phosphate of ATP to D-galactose to form alpha-D-galactose-1-phosphate (Gal-1-P).</text>
</comment>
<comment type="catalytic activity">
    <reaction evidence="1">
        <text>alpha-D-galactose + ATP = alpha-D-galactose 1-phosphate + ADP + H(+)</text>
        <dbReference type="Rhea" id="RHEA:13553"/>
        <dbReference type="ChEBI" id="CHEBI:15378"/>
        <dbReference type="ChEBI" id="CHEBI:28061"/>
        <dbReference type="ChEBI" id="CHEBI:30616"/>
        <dbReference type="ChEBI" id="CHEBI:58336"/>
        <dbReference type="ChEBI" id="CHEBI:456216"/>
        <dbReference type="EC" id="2.7.1.6"/>
    </reaction>
</comment>
<comment type="pathway">
    <text evidence="1">Carbohydrate metabolism; galactose metabolism.</text>
</comment>
<comment type="subcellular location">
    <subcellularLocation>
        <location evidence="1">Cytoplasm</location>
    </subcellularLocation>
</comment>
<comment type="similarity">
    <text evidence="1">Belongs to the GHMP kinase family. GalK subfamily.</text>
</comment>
<organism>
    <name type="scientific">Aeromonas hydrophila subsp. hydrophila (strain ATCC 7966 / DSM 30187 / BCRC 13018 / CCUG 14551 / JCM 1027 / KCTC 2358 / NCIMB 9240 / NCTC 8049)</name>
    <dbReference type="NCBI Taxonomy" id="380703"/>
    <lineage>
        <taxon>Bacteria</taxon>
        <taxon>Pseudomonadati</taxon>
        <taxon>Pseudomonadota</taxon>
        <taxon>Gammaproteobacteria</taxon>
        <taxon>Aeromonadales</taxon>
        <taxon>Aeromonadaceae</taxon>
        <taxon>Aeromonas</taxon>
    </lineage>
</organism>
<feature type="chain" id="PRO_1000005744" description="Galactokinase">
    <location>
        <begin position="1"/>
        <end position="382"/>
    </location>
</feature>
<feature type="active site" description="Proton acceptor" evidence="1">
    <location>
        <position position="174"/>
    </location>
</feature>
<feature type="binding site" evidence="1">
    <location>
        <begin position="34"/>
        <end position="37"/>
    </location>
    <ligand>
        <name>substrate</name>
    </ligand>
</feature>
<feature type="binding site" evidence="1">
    <location>
        <begin position="124"/>
        <end position="130"/>
    </location>
    <ligand>
        <name>ATP</name>
        <dbReference type="ChEBI" id="CHEBI:30616"/>
    </ligand>
</feature>
<feature type="binding site" evidence="1">
    <location>
        <position position="130"/>
    </location>
    <ligand>
        <name>Mg(2+)</name>
        <dbReference type="ChEBI" id="CHEBI:18420"/>
    </ligand>
</feature>
<feature type="binding site" evidence="1">
    <location>
        <position position="162"/>
    </location>
    <ligand>
        <name>Mg(2+)</name>
        <dbReference type="ChEBI" id="CHEBI:18420"/>
    </ligand>
</feature>
<feature type="binding site" evidence="1">
    <location>
        <position position="223"/>
    </location>
    <ligand>
        <name>substrate</name>
    </ligand>
</feature>
<feature type="site" description="Transition state stabilizer" evidence="1">
    <location>
        <position position="28"/>
    </location>
</feature>
<keyword id="KW-0067">ATP-binding</keyword>
<keyword id="KW-0119">Carbohydrate metabolism</keyword>
<keyword id="KW-0963">Cytoplasm</keyword>
<keyword id="KW-0299">Galactose metabolism</keyword>
<keyword id="KW-0418">Kinase</keyword>
<keyword id="KW-0460">Magnesium</keyword>
<keyword id="KW-0479">Metal-binding</keyword>
<keyword id="KW-0547">Nucleotide-binding</keyword>
<keyword id="KW-1185">Reference proteome</keyword>
<keyword id="KW-0808">Transferase</keyword>
<gene>
    <name evidence="1" type="primary">galK</name>
    <name type="ordered locus">AHA_4105</name>
</gene>
<name>GAL1_AERHH</name>
<reference key="1">
    <citation type="journal article" date="2006" name="J. Bacteriol.">
        <title>Genome sequence of Aeromonas hydrophila ATCC 7966T: jack of all trades.</title>
        <authorList>
            <person name="Seshadri R."/>
            <person name="Joseph S.W."/>
            <person name="Chopra A.K."/>
            <person name="Sha J."/>
            <person name="Shaw J."/>
            <person name="Graf J."/>
            <person name="Haft D.H."/>
            <person name="Wu M."/>
            <person name="Ren Q."/>
            <person name="Rosovitz M.J."/>
            <person name="Madupu R."/>
            <person name="Tallon L."/>
            <person name="Kim M."/>
            <person name="Jin S."/>
            <person name="Vuong H."/>
            <person name="Stine O.C."/>
            <person name="Ali A."/>
            <person name="Horneman A.J."/>
            <person name="Heidelberg J.F."/>
        </authorList>
    </citation>
    <scope>NUCLEOTIDE SEQUENCE [LARGE SCALE GENOMIC DNA]</scope>
    <source>
        <strain>ATCC 7966 / DSM 30187 / BCRC 13018 / CCUG 14551 / JCM 1027 / KCTC 2358 / NCIMB 9240 / NCTC 8049</strain>
    </source>
</reference>
<proteinExistence type="inferred from homology"/>
<dbReference type="EC" id="2.7.1.6" evidence="1"/>
<dbReference type="EMBL" id="CP000462">
    <property type="protein sequence ID" value="ABK38843.1"/>
    <property type="molecule type" value="Genomic_DNA"/>
</dbReference>
<dbReference type="RefSeq" id="WP_011707767.1">
    <property type="nucleotide sequence ID" value="NC_008570.1"/>
</dbReference>
<dbReference type="RefSeq" id="YP_858529.1">
    <property type="nucleotide sequence ID" value="NC_008570.1"/>
</dbReference>
<dbReference type="SMR" id="A0KQH8"/>
<dbReference type="STRING" id="380703.AHA_4105"/>
<dbReference type="EnsemblBacteria" id="ABK38843">
    <property type="protein sequence ID" value="ABK38843"/>
    <property type="gene ID" value="AHA_4105"/>
</dbReference>
<dbReference type="GeneID" id="4490247"/>
<dbReference type="KEGG" id="aha:AHA_4105"/>
<dbReference type="PATRIC" id="fig|380703.7.peg.4062"/>
<dbReference type="eggNOG" id="COG0153">
    <property type="taxonomic scope" value="Bacteria"/>
</dbReference>
<dbReference type="HOGENOM" id="CLU_017814_2_1_6"/>
<dbReference type="OrthoDB" id="250531at2"/>
<dbReference type="UniPathway" id="UPA00214"/>
<dbReference type="Proteomes" id="UP000000756">
    <property type="component" value="Chromosome"/>
</dbReference>
<dbReference type="GO" id="GO:0005829">
    <property type="term" value="C:cytosol"/>
    <property type="evidence" value="ECO:0007669"/>
    <property type="project" value="TreeGrafter"/>
</dbReference>
<dbReference type="GO" id="GO:0005524">
    <property type="term" value="F:ATP binding"/>
    <property type="evidence" value="ECO:0007669"/>
    <property type="project" value="UniProtKB-UniRule"/>
</dbReference>
<dbReference type="GO" id="GO:0004335">
    <property type="term" value="F:galactokinase activity"/>
    <property type="evidence" value="ECO:0007669"/>
    <property type="project" value="UniProtKB-UniRule"/>
</dbReference>
<dbReference type="GO" id="GO:0000287">
    <property type="term" value="F:magnesium ion binding"/>
    <property type="evidence" value="ECO:0007669"/>
    <property type="project" value="UniProtKB-UniRule"/>
</dbReference>
<dbReference type="GO" id="GO:0006012">
    <property type="term" value="P:galactose metabolic process"/>
    <property type="evidence" value="ECO:0007669"/>
    <property type="project" value="UniProtKB-UniRule"/>
</dbReference>
<dbReference type="FunFam" id="3.30.230.10:FF:000017">
    <property type="entry name" value="Galactokinase"/>
    <property type="match status" value="1"/>
</dbReference>
<dbReference type="FunFam" id="3.30.70.890:FF:000001">
    <property type="entry name" value="Galactokinase"/>
    <property type="match status" value="1"/>
</dbReference>
<dbReference type="Gene3D" id="3.30.230.10">
    <property type="match status" value="1"/>
</dbReference>
<dbReference type="Gene3D" id="3.30.70.890">
    <property type="entry name" value="GHMP kinase, C-terminal domain"/>
    <property type="match status" value="1"/>
</dbReference>
<dbReference type="HAMAP" id="MF_00246">
    <property type="entry name" value="Galactokinase"/>
    <property type="match status" value="1"/>
</dbReference>
<dbReference type="InterPro" id="IPR000705">
    <property type="entry name" value="Galactokinase"/>
</dbReference>
<dbReference type="InterPro" id="IPR022963">
    <property type="entry name" value="Galactokinase_bac"/>
</dbReference>
<dbReference type="InterPro" id="IPR019741">
    <property type="entry name" value="Galactokinase_CS"/>
</dbReference>
<dbReference type="InterPro" id="IPR019539">
    <property type="entry name" value="GalKase_N"/>
</dbReference>
<dbReference type="InterPro" id="IPR013750">
    <property type="entry name" value="GHMP_kinase_C_dom"/>
</dbReference>
<dbReference type="InterPro" id="IPR036554">
    <property type="entry name" value="GHMP_kinase_C_sf"/>
</dbReference>
<dbReference type="InterPro" id="IPR006204">
    <property type="entry name" value="GHMP_kinase_N_dom"/>
</dbReference>
<dbReference type="InterPro" id="IPR006203">
    <property type="entry name" value="GHMP_knse_ATP-bd_CS"/>
</dbReference>
<dbReference type="InterPro" id="IPR006206">
    <property type="entry name" value="Mevalonate/galactokinase"/>
</dbReference>
<dbReference type="InterPro" id="IPR020568">
    <property type="entry name" value="Ribosomal_Su5_D2-typ_SF"/>
</dbReference>
<dbReference type="InterPro" id="IPR014721">
    <property type="entry name" value="Ribsml_uS5_D2-typ_fold_subgr"/>
</dbReference>
<dbReference type="NCBIfam" id="TIGR00131">
    <property type="entry name" value="gal_kin"/>
    <property type="match status" value="1"/>
</dbReference>
<dbReference type="NCBIfam" id="NF003472">
    <property type="entry name" value="PRK05101.1"/>
    <property type="match status" value="1"/>
</dbReference>
<dbReference type="PANTHER" id="PTHR10457:SF7">
    <property type="entry name" value="GALACTOKINASE-RELATED"/>
    <property type="match status" value="1"/>
</dbReference>
<dbReference type="PANTHER" id="PTHR10457">
    <property type="entry name" value="MEVALONATE KINASE/GALACTOKINASE"/>
    <property type="match status" value="1"/>
</dbReference>
<dbReference type="Pfam" id="PF10509">
    <property type="entry name" value="GalKase_gal_bdg"/>
    <property type="match status" value="1"/>
</dbReference>
<dbReference type="Pfam" id="PF08544">
    <property type="entry name" value="GHMP_kinases_C"/>
    <property type="match status" value="1"/>
</dbReference>
<dbReference type="Pfam" id="PF00288">
    <property type="entry name" value="GHMP_kinases_N"/>
    <property type="match status" value="1"/>
</dbReference>
<dbReference type="PIRSF" id="PIRSF000530">
    <property type="entry name" value="Galactokinase"/>
    <property type="match status" value="1"/>
</dbReference>
<dbReference type="PRINTS" id="PR00473">
    <property type="entry name" value="GALCTOKINASE"/>
</dbReference>
<dbReference type="PRINTS" id="PR00959">
    <property type="entry name" value="MEVGALKINASE"/>
</dbReference>
<dbReference type="SUPFAM" id="SSF55060">
    <property type="entry name" value="GHMP Kinase, C-terminal domain"/>
    <property type="match status" value="1"/>
</dbReference>
<dbReference type="SUPFAM" id="SSF54211">
    <property type="entry name" value="Ribosomal protein S5 domain 2-like"/>
    <property type="match status" value="1"/>
</dbReference>
<dbReference type="PROSITE" id="PS00106">
    <property type="entry name" value="GALACTOKINASE"/>
    <property type="match status" value="1"/>
</dbReference>
<dbReference type="PROSITE" id="PS00627">
    <property type="entry name" value="GHMP_KINASES_ATP"/>
    <property type="match status" value="1"/>
</dbReference>
<evidence type="ECO:0000255" key="1">
    <source>
        <dbReference type="HAMAP-Rule" id="MF_00246"/>
    </source>
</evidence>
<protein>
    <recommendedName>
        <fullName evidence="1">Galactokinase</fullName>
        <ecNumber evidence="1">2.7.1.6</ecNumber>
    </recommendedName>
    <alternativeName>
        <fullName evidence="1">Galactose kinase</fullName>
    </alternativeName>
</protein>